<dbReference type="EMBL" id="CP000038">
    <property type="protein sequence ID" value="AAZ87166.1"/>
    <property type="molecule type" value="Genomic_DNA"/>
</dbReference>
<dbReference type="RefSeq" id="WP_000543535.1">
    <property type="nucleotide sequence ID" value="NC_007384.1"/>
</dbReference>
<dbReference type="SMR" id="Q3Z4Z6"/>
<dbReference type="GeneID" id="93777047"/>
<dbReference type="KEGG" id="ssn:SSON_0390"/>
<dbReference type="HOGENOM" id="CLU_108412_0_0_6"/>
<dbReference type="Proteomes" id="UP000002529">
    <property type="component" value="Chromosome"/>
</dbReference>
<dbReference type="GO" id="GO:0005524">
    <property type="term" value="F:ATP binding"/>
    <property type="evidence" value="ECO:0007669"/>
    <property type="project" value="UniProtKB-KW"/>
</dbReference>
<dbReference type="GO" id="GO:0003677">
    <property type="term" value="F:DNA binding"/>
    <property type="evidence" value="ECO:0007669"/>
    <property type="project" value="UniProtKB-KW"/>
</dbReference>
<dbReference type="GO" id="GO:0008270">
    <property type="term" value="F:zinc ion binding"/>
    <property type="evidence" value="ECO:0007669"/>
    <property type="project" value="UniProtKB-UniRule"/>
</dbReference>
<dbReference type="GO" id="GO:0045892">
    <property type="term" value="P:negative regulation of DNA-templated transcription"/>
    <property type="evidence" value="ECO:0007669"/>
    <property type="project" value="UniProtKB-UniRule"/>
</dbReference>
<dbReference type="HAMAP" id="MF_00440">
    <property type="entry name" value="NrdR"/>
    <property type="match status" value="1"/>
</dbReference>
<dbReference type="InterPro" id="IPR005144">
    <property type="entry name" value="ATP-cone_dom"/>
</dbReference>
<dbReference type="InterPro" id="IPR055173">
    <property type="entry name" value="NrdR-like_N"/>
</dbReference>
<dbReference type="InterPro" id="IPR003796">
    <property type="entry name" value="RNR_NrdR-like"/>
</dbReference>
<dbReference type="NCBIfam" id="TIGR00244">
    <property type="entry name" value="transcriptional regulator NrdR"/>
    <property type="match status" value="1"/>
</dbReference>
<dbReference type="PANTHER" id="PTHR30455">
    <property type="entry name" value="TRANSCRIPTIONAL REPRESSOR NRDR"/>
    <property type="match status" value="1"/>
</dbReference>
<dbReference type="PANTHER" id="PTHR30455:SF2">
    <property type="entry name" value="TRANSCRIPTIONAL REPRESSOR NRDR"/>
    <property type="match status" value="1"/>
</dbReference>
<dbReference type="Pfam" id="PF03477">
    <property type="entry name" value="ATP-cone"/>
    <property type="match status" value="1"/>
</dbReference>
<dbReference type="Pfam" id="PF22811">
    <property type="entry name" value="Zn_ribbon_NrdR"/>
    <property type="match status" value="1"/>
</dbReference>
<dbReference type="PROSITE" id="PS51161">
    <property type="entry name" value="ATP_CONE"/>
    <property type="match status" value="1"/>
</dbReference>
<sequence length="149" mass="17229">MHCPFCFAVDTKVIDSRLVGEGSSVRRRRQCLVCNERFTTFEVAELVMPRVVKSNDVREPFNEEKLRSGMLRALEKRPVSSDDVEMAINHIKSQLRATGEREVPSKMIGNLVMEQLKKLDKVAYIRFASVYRSFEDIKEFGEEIARLED</sequence>
<name>NRDR_SHISS</name>
<keyword id="KW-0067">ATP-binding</keyword>
<keyword id="KW-0238">DNA-binding</keyword>
<keyword id="KW-0479">Metal-binding</keyword>
<keyword id="KW-0547">Nucleotide-binding</keyword>
<keyword id="KW-1185">Reference proteome</keyword>
<keyword id="KW-0678">Repressor</keyword>
<keyword id="KW-0804">Transcription</keyword>
<keyword id="KW-0805">Transcription regulation</keyword>
<keyword id="KW-0862">Zinc</keyword>
<keyword id="KW-0863">Zinc-finger</keyword>
<evidence type="ECO:0000255" key="1">
    <source>
        <dbReference type="HAMAP-Rule" id="MF_00440"/>
    </source>
</evidence>
<accession>Q3Z4Z6</accession>
<protein>
    <recommendedName>
        <fullName evidence="1">Transcriptional repressor NrdR</fullName>
    </recommendedName>
</protein>
<organism>
    <name type="scientific">Shigella sonnei (strain Ss046)</name>
    <dbReference type="NCBI Taxonomy" id="300269"/>
    <lineage>
        <taxon>Bacteria</taxon>
        <taxon>Pseudomonadati</taxon>
        <taxon>Pseudomonadota</taxon>
        <taxon>Gammaproteobacteria</taxon>
        <taxon>Enterobacterales</taxon>
        <taxon>Enterobacteriaceae</taxon>
        <taxon>Shigella</taxon>
    </lineage>
</organism>
<comment type="function">
    <text evidence="1">Negatively regulates transcription of bacterial ribonucleotide reductase nrd genes and operons by binding to NrdR-boxes.</text>
</comment>
<comment type="cofactor">
    <cofactor evidence="1">
        <name>Zn(2+)</name>
        <dbReference type="ChEBI" id="CHEBI:29105"/>
    </cofactor>
    <text evidence="1">Binds 1 zinc ion.</text>
</comment>
<comment type="similarity">
    <text evidence="1">Belongs to the NrdR family.</text>
</comment>
<proteinExistence type="inferred from homology"/>
<reference key="1">
    <citation type="journal article" date="2005" name="Nucleic Acids Res.">
        <title>Genome dynamics and diversity of Shigella species, the etiologic agents of bacillary dysentery.</title>
        <authorList>
            <person name="Yang F."/>
            <person name="Yang J."/>
            <person name="Zhang X."/>
            <person name="Chen L."/>
            <person name="Jiang Y."/>
            <person name="Yan Y."/>
            <person name="Tang X."/>
            <person name="Wang J."/>
            <person name="Xiong Z."/>
            <person name="Dong J."/>
            <person name="Xue Y."/>
            <person name="Zhu Y."/>
            <person name="Xu X."/>
            <person name="Sun L."/>
            <person name="Chen S."/>
            <person name="Nie H."/>
            <person name="Peng J."/>
            <person name="Xu J."/>
            <person name="Wang Y."/>
            <person name="Yuan Z."/>
            <person name="Wen Y."/>
            <person name="Yao Z."/>
            <person name="Shen Y."/>
            <person name="Qiang B."/>
            <person name="Hou Y."/>
            <person name="Yu J."/>
            <person name="Jin Q."/>
        </authorList>
    </citation>
    <scope>NUCLEOTIDE SEQUENCE [LARGE SCALE GENOMIC DNA]</scope>
    <source>
        <strain>Ss046</strain>
    </source>
</reference>
<gene>
    <name evidence="1" type="primary">nrdR</name>
    <name type="ordered locus">SSON_0390</name>
</gene>
<feature type="chain" id="PRO_0000230893" description="Transcriptional repressor NrdR">
    <location>
        <begin position="1"/>
        <end position="149"/>
    </location>
</feature>
<feature type="domain" description="ATP-cone" evidence="1">
    <location>
        <begin position="49"/>
        <end position="139"/>
    </location>
</feature>
<feature type="zinc finger region" evidence="1">
    <location>
        <begin position="3"/>
        <end position="34"/>
    </location>
</feature>